<protein>
    <recommendedName>
        <fullName>Bifunctional arginine demethylase and lysyl-hydroxylase JMJD6</fullName>
        <ecNumber>1.14.11.-</ecNumber>
    </recommendedName>
    <alternativeName>
        <fullName>Histone arginine demethylase JMJD6</fullName>
    </alternativeName>
    <alternativeName>
        <fullName>JmjC domain-containing protein 6</fullName>
    </alternativeName>
    <alternativeName>
        <fullName>Jumonji domain-containing protein 6</fullName>
    </alternativeName>
    <alternativeName>
        <fullName>Lysyl-hydroxylase JMJD6</fullName>
    </alternativeName>
    <alternativeName>
        <fullName>Peptide-lysine 5-dioxygenase JMJD6</fullName>
    </alternativeName>
    <alternativeName>
        <fullName>Phosphatidylserine receptor</fullName>
        <shortName>Protein PTDSR</shortName>
    </alternativeName>
</protein>
<keyword id="KW-0156">Chromatin regulator</keyword>
<keyword id="KW-0963">Cytoplasm</keyword>
<keyword id="KW-0217">Developmental protein</keyword>
<keyword id="KW-0221">Differentiation</keyword>
<keyword id="KW-0223">Dioxygenase</keyword>
<keyword id="KW-0408">Iron</keyword>
<keyword id="KW-0479">Metal-binding</keyword>
<keyword id="KW-0507">mRNA processing</keyword>
<keyword id="KW-0508">mRNA splicing</keyword>
<keyword id="KW-0539">Nucleus</keyword>
<keyword id="KW-0560">Oxidoreductase</keyword>
<keyword id="KW-0597">Phosphoprotein</keyword>
<keyword id="KW-1185">Reference proteome</keyword>
<keyword id="KW-0694">RNA-binding</keyword>
<keyword id="KW-0804">Transcription</keyword>
<keyword id="KW-0805">Transcription regulation</keyword>
<gene>
    <name type="primary">JMJD6</name>
    <name type="synonym">PTDSR</name>
</gene>
<comment type="function">
    <text evidence="2 3">Dioxygenase that can both act as a arginine demethylase and a lysyl-hydroxylase. Acts as a lysyl-hydroxylase that catalyzes 5-hydroxylation on specific lysine residues of target proteins such as U2AF2/U2AF65 and LUC7L2. Regulates RNA splicing by mediating 5-hydroxylation of U2AF2/U2AF65, affecting the pre-mRNA splicing activity of U2AF2/U2AF65. Hydroxylates its own N-terminus, which is required for homooligomerization (By similarity). Plays a role in the regulation of nucleolar liquid-liquid phase separation (LLPS) by post-translationally modifying LIAT1 at its lysine-rich domain which inhibits LIAT1 nucleolar targeting (By similarity). In addition to peptidyl-lysine 5-dioxygenase activity, may act as an RNA hydroxylase, as suggested by its ability to bind single strand RNA. Also acts as an arginine demethylase which preferentially demethylates asymmetric dimethylation. Demethylates histone H3 at 'Arg-2' (H3R2me) and histone H4 at 'Arg-3' (H4R3me), including mono-, symmetric di- and asymmetric dimethylated forms, thereby playing a role in histone code. However, histone arginine demethylation may not constitute the primary activity in vivo. In collaboration with BRD4, interacts with the positive transcription elongation factor b (P-TEFb) complex in its active form to regulate polymerase II promoter-proximal pause release for transcriptional activation of a large cohort of genes. On distal enhancers, so called anti-pause enhancers, demethylates both histone H4R3me2 and the methyl cap of 7SKsnRNA leading to the dismissal of the 7SKsnRNA:HEXIM1 inhibitor complex. After removal of repressive marks, the complex BRD4:JMJD6 attract and retain the P-TEFb complex on chromatin, leading to its activation, promoter-proximal polymerase II pause release, and transcriptional activation. Demethylates other arginine methylated-proteins such as ESR1. Has no histone lysine demethylase activity (By similarity). Required for differentiation of multiple organs during embryogenesis. Acts as a key regulator of hematopoietic differentiation: required for angiogenic sprouting by regulating the pre-mRNA splicing activity of U2AF2/U2AF65 (By similarity). Seems to be necessary for the regulation of macrophage cytokine responses (By similarity).</text>
</comment>
<comment type="catalytic activity">
    <reaction evidence="2">
        <text>L-lysyl-[protein] + 2-oxoglutarate + O2 = (5S)-5-hydroxy-L-lysyl-[protein] + succinate + CO2</text>
        <dbReference type="Rhea" id="RHEA:58360"/>
        <dbReference type="Rhea" id="RHEA-COMP:9752"/>
        <dbReference type="Rhea" id="RHEA-COMP:15144"/>
        <dbReference type="ChEBI" id="CHEBI:15379"/>
        <dbReference type="ChEBI" id="CHEBI:16526"/>
        <dbReference type="ChEBI" id="CHEBI:16810"/>
        <dbReference type="ChEBI" id="CHEBI:29969"/>
        <dbReference type="ChEBI" id="CHEBI:30031"/>
        <dbReference type="ChEBI" id="CHEBI:141843"/>
    </reaction>
</comment>
<comment type="catalytic activity">
    <reaction evidence="2">
        <text>N(omega),N(omega)'-dimethyl-L-arginyl-[protein] + 2 2-oxoglutarate + 2 O2 = L-arginyl-[protein] + 2 formaldehyde + 2 succinate + 2 CO2</text>
        <dbReference type="Rhea" id="RHEA:58348"/>
        <dbReference type="Rhea" id="RHEA-COMP:10532"/>
        <dbReference type="Rhea" id="RHEA-COMP:11992"/>
        <dbReference type="ChEBI" id="CHEBI:15379"/>
        <dbReference type="ChEBI" id="CHEBI:16526"/>
        <dbReference type="ChEBI" id="CHEBI:16810"/>
        <dbReference type="ChEBI" id="CHEBI:16842"/>
        <dbReference type="ChEBI" id="CHEBI:29965"/>
        <dbReference type="ChEBI" id="CHEBI:30031"/>
        <dbReference type="ChEBI" id="CHEBI:88221"/>
    </reaction>
</comment>
<comment type="catalytic activity">
    <reaction evidence="2">
        <text>N(omega),N(omega)'-dimethyl-L-arginyl-[protein] + 2-oxoglutarate + O2 = N(omega)-methyl-L-arginyl-[protein] + formaldehyde + succinate + CO2</text>
        <dbReference type="Rhea" id="RHEA:58472"/>
        <dbReference type="Rhea" id="RHEA-COMP:11990"/>
        <dbReference type="Rhea" id="RHEA-COMP:11992"/>
        <dbReference type="ChEBI" id="CHEBI:15379"/>
        <dbReference type="ChEBI" id="CHEBI:16526"/>
        <dbReference type="ChEBI" id="CHEBI:16810"/>
        <dbReference type="ChEBI" id="CHEBI:16842"/>
        <dbReference type="ChEBI" id="CHEBI:30031"/>
        <dbReference type="ChEBI" id="CHEBI:65280"/>
        <dbReference type="ChEBI" id="CHEBI:88221"/>
    </reaction>
</comment>
<comment type="catalytic activity">
    <reaction evidence="2">
        <text>a 5'-end methyltriphosphate-guanosine-ribonucleotide-snRNA + 2-oxoglutarate + O2 = a 5'-end triphospho-guanosine-ribonucleotide-snRNA + formaldehyde + succinate + CO2 + H(+)</text>
        <dbReference type="Rhea" id="RHEA:58784"/>
        <dbReference type="Rhea" id="RHEA-COMP:15220"/>
        <dbReference type="Rhea" id="RHEA-COMP:15221"/>
        <dbReference type="ChEBI" id="CHEBI:15378"/>
        <dbReference type="ChEBI" id="CHEBI:15379"/>
        <dbReference type="ChEBI" id="CHEBI:16526"/>
        <dbReference type="ChEBI" id="CHEBI:16810"/>
        <dbReference type="ChEBI" id="CHEBI:16842"/>
        <dbReference type="ChEBI" id="CHEBI:30031"/>
        <dbReference type="ChEBI" id="CHEBI:138278"/>
        <dbReference type="ChEBI" id="CHEBI:142789"/>
    </reaction>
</comment>
<comment type="cofactor">
    <cofactor evidence="2">
        <name>Fe(2+)</name>
        <dbReference type="ChEBI" id="CHEBI:29033"/>
    </cofactor>
    <text evidence="2">Binds 1 Fe(2+) ion per subunit.</text>
</comment>
<comment type="subunit">
    <text evidence="2 3">Homooligomerizes; requires lysyl-hydroxylase activity (By similarity). Interacts with LUC7L2, LUC7L3 and U2AF2/U2AF65 (By similarity). Interacts with CDK9 and CCNT1; the interaction is direct with CDK9 and associates the P-TEFb complex when active. Interacts (via JmjC and N-terminal domains) with BRD4 (via NET domain); the interaction is stronger in presence of ssRNA and recruits JMJD6 on distal enhancers (By similarity). Interacts with ARGLU1; interaction may be involved in ARGLU1-mediated modulation of alternative splicing (By similarity).</text>
</comment>
<comment type="subcellular location">
    <subcellularLocation>
        <location evidence="2">Nucleus</location>
        <location evidence="2">Nucleoplasm</location>
    </subcellularLocation>
    <subcellularLocation>
        <location evidence="2">Nucleus</location>
        <location evidence="2">Nucleolus</location>
    </subcellularLocation>
    <subcellularLocation>
        <location evidence="2">Cytoplasm</location>
    </subcellularLocation>
    <text evidence="2">Mainly found throughout the nucleoplasm outside of regions containing heterochromatic DNA, with some localization in nucleolus. During mitosis, excluded from the nucleus and reappears in the telophase of the cell cycle.</text>
</comment>
<comment type="domain">
    <text evidence="2">The nuclear localization signal motifs are necessary and sufficient to target it into the nucleus.</text>
</comment>
<comment type="PTM">
    <text evidence="2">Hydroxylates its own N-terminus; hydroxylation is required for homooligomerization.</text>
</comment>
<comment type="similarity">
    <text evidence="6">Belongs to the JMJD6 family.</text>
</comment>
<dbReference type="EC" id="1.14.11.-"/>
<dbReference type="EMBL" id="CR860528">
    <property type="protein sequence ID" value="CAH92654.1"/>
    <property type="molecule type" value="mRNA"/>
</dbReference>
<dbReference type="RefSeq" id="NP_001126553.1">
    <property type="nucleotide sequence ID" value="NM_001133081.1"/>
</dbReference>
<dbReference type="SMR" id="Q5R6G2"/>
<dbReference type="FunCoup" id="Q5R6G2">
    <property type="interactions" value="3687"/>
</dbReference>
<dbReference type="STRING" id="9601.ENSPPYP00000009734"/>
<dbReference type="Ensembl" id="ENSPPYT00000061833.1">
    <property type="protein sequence ID" value="ENSPPYP00000041518.1"/>
    <property type="gene ID" value="ENSPPYG00000008667.3"/>
</dbReference>
<dbReference type="GeneID" id="100173544"/>
<dbReference type="KEGG" id="pon:100173544"/>
<dbReference type="CTD" id="23210"/>
<dbReference type="eggNOG" id="KOG2130">
    <property type="taxonomic scope" value="Eukaryota"/>
</dbReference>
<dbReference type="GeneTree" id="ENSGT00940000156867"/>
<dbReference type="InParanoid" id="Q5R6G2"/>
<dbReference type="OrthoDB" id="424465at2759"/>
<dbReference type="Proteomes" id="UP000001595">
    <property type="component" value="Chromosome 17"/>
</dbReference>
<dbReference type="GO" id="GO:0005737">
    <property type="term" value="C:cytoplasm"/>
    <property type="evidence" value="ECO:0000250"/>
    <property type="project" value="UniProtKB"/>
</dbReference>
<dbReference type="GO" id="GO:0005730">
    <property type="term" value="C:nucleolus"/>
    <property type="evidence" value="ECO:0000250"/>
    <property type="project" value="UniProtKB"/>
</dbReference>
<dbReference type="GO" id="GO:0005654">
    <property type="term" value="C:nucleoplasm"/>
    <property type="evidence" value="ECO:0000250"/>
    <property type="project" value="UniProtKB"/>
</dbReference>
<dbReference type="GO" id="GO:0005634">
    <property type="term" value="C:nucleus"/>
    <property type="evidence" value="ECO:0000250"/>
    <property type="project" value="UniProtKB"/>
</dbReference>
<dbReference type="GO" id="GO:0032452">
    <property type="term" value="F:histone demethylase activity"/>
    <property type="evidence" value="ECO:0000250"/>
    <property type="project" value="UniProtKB"/>
</dbReference>
<dbReference type="GO" id="GO:0033746">
    <property type="term" value="F:histone H3R2 demethylase activity"/>
    <property type="evidence" value="ECO:0000250"/>
    <property type="project" value="UniProtKB"/>
</dbReference>
<dbReference type="GO" id="GO:0033749">
    <property type="term" value="F:histone H4R3 demethylase activity"/>
    <property type="evidence" value="ECO:0000250"/>
    <property type="project" value="UniProtKB"/>
</dbReference>
<dbReference type="GO" id="GO:0046872">
    <property type="term" value="F:metal ion binding"/>
    <property type="evidence" value="ECO:0007669"/>
    <property type="project" value="UniProtKB-KW"/>
</dbReference>
<dbReference type="GO" id="GO:0035515">
    <property type="term" value="F:oxidative RNA demethylase activity"/>
    <property type="evidence" value="ECO:0000250"/>
    <property type="project" value="UniProtKB"/>
</dbReference>
<dbReference type="GO" id="GO:0106140">
    <property type="term" value="F:P-TEFb complex binding"/>
    <property type="evidence" value="ECO:0007669"/>
    <property type="project" value="TreeGrafter"/>
</dbReference>
<dbReference type="GO" id="GO:0070815">
    <property type="term" value="F:peptidyl-lysine 5-dioxygenase activity"/>
    <property type="evidence" value="ECO:0000250"/>
    <property type="project" value="UniProtKB"/>
</dbReference>
<dbReference type="GO" id="GO:0003727">
    <property type="term" value="F:single-stranded RNA binding"/>
    <property type="evidence" value="ECO:0000250"/>
    <property type="project" value="UniProtKB"/>
</dbReference>
<dbReference type="GO" id="GO:0140537">
    <property type="term" value="F:transcription regulator activator activity"/>
    <property type="evidence" value="ECO:0000250"/>
    <property type="project" value="UniProtKB"/>
</dbReference>
<dbReference type="GO" id="GO:0030154">
    <property type="term" value="P:cell differentiation"/>
    <property type="evidence" value="ECO:0007669"/>
    <property type="project" value="UniProtKB-KW"/>
</dbReference>
<dbReference type="GO" id="GO:0006397">
    <property type="term" value="P:mRNA processing"/>
    <property type="evidence" value="ECO:0007669"/>
    <property type="project" value="UniProtKB-KW"/>
</dbReference>
<dbReference type="GO" id="GO:0035513">
    <property type="term" value="P:oxidative RNA demethylation"/>
    <property type="evidence" value="ECO:0000250"/>
    <property type="project" value="UniProtKB"/>
</dbReference>
<dbReference type="GO" id="GO:0018395">
    <property type="term" value="P:peptidyl-lysine hydroxylation to 5-hydroxy-L-lysine"/>
    <property type="evidence" value="ECO:0000250"/>
    <property type="project" value="UniProtKB"/>
</dbReference>
<dbReference type="GO" id="GO:0006909">
    <property type="term" value="P:phagocytosis"/>
    <property type="evidence" value="ECO:0007669"/>
    <property type="project" value="TreeGrafter"/>
</dbReference>
<dbReference type="GO" id="GO:0045893">
    <property type="term" value="P:positive regulation of DNA-templated transcription"/>
    <property type="evidence" value="ECO:0000250"/>
    <property type="project" value="UniProtKB"/>
</dbReference>
<dbReference type="GO" id="GO:0045944">
    <property type="term" value="P:positive regulation of transcription by RNA polymerase II"/>
    <property type="evidence" value="ECO:0000250"/>
    <property type="project" value="UniProtKB"/>
</dbReference>
<dbReference type="GO" id="GO:0051260">
    <property type="term" value="P:protein homooligomerization"/>
    <property type="evidence" value="ECO:0000250"/>
    <property type="project" value="UniProtKB"/>
</dbReference>
<dbReference type="GO" id="GO:0048024">
    <property type="term" value="P:regulation of mRNA splicing, via spliceosome"/>
    <property type="evidence" value="ECO:0000250"/>
    <property type="project" value="UniProtKB"/>
</dbReference>
<dbReference type="GO" id="GO:0008380">
    <property type="term" value="P:RNA splicing"/>
    <property type="evidence" value="ECO:0007669"/>
    <property type="project" value="UniProtKB-KW"/>
</dbReference>
<dbReference type="GO" id="GO:0002040">
    <property type="term" value="P:sprouting angiogenesis"/>
    <property type="evidence" value="ECO:0000250"/>
    <property type="project" value="UniProtKB"/>
</dbReference>
<dbReference type="FunFam" id="1.20.1280.270:FF:000001">
    <property type="entry name" value="Bifunctional arginine demethylase and lysyl-hydroxylase JMJD6"/>
    <property type="match status" value="1"/>
</dbReference>
<dbReference type="FunFam" id="2.60.120.650:FF:000010">
    <property type="entry name" value="bifunctional arginine demethylase and lysyl-hydroxylase JMJD6 isoform X2"/>
    <property type="match status" value="1"/>
</dbReference>
<dbReference type="Gene3D" id="1.20.1280.270">
    <property type="match status" value="1"/>
</dbReference>
<dbReference type="Gene3D" id="2.60.120.650">
    <property type="entry name" value="Cupin"/>
    <property type="match status" value="1"/>
</dbReference>
<dbReference type="InterPro" id="IPR003347">
    <property type="entry name" value="JmjC_dom"/>
</dbReference>
<dbReference type="InterPro" id="IPR050910">
    <property type="entry name" value="JMJD6_ArgDemeth/LysHydrox"/>
</dbReference>
<dbReference type="PANTHER" id="PTHR12480">
    <property type="entry name" value="ARGININE DEMETHYLASE AND LYSYL-HYDROXYLASE JMJD"/>
    <property type="match status" value="1"/>
</dbReference>
<dbReference type="PANTHER" id="PTHR12480:SF32">
    <property type="entry name" value="BIFUNCTIONAL ARGININE DEMETHYLASE AND LYSYL-HYDROXYLASE JMJD6"/>
    <property type="match status" value="1"/>
</dbReference>
<dbReference type="Pfam" id="PF02373">
    <property type="entry name" value="JmjC"/>
    <property type="match status" value="1"/>
</dbReference>
<dbReference type="SMART" id="SM00558">
    <property type="entry name" value="JmjC"/>
    <property type="match status" value="1"/>
</dbReference>
<dbReference type="SUPFAM" id="SSF51197">
    <property type="entry name" value="Clavaminate synthase-like"/>
    <property type="match status" value="1"/>
</dbReference>
<dbReference type="PROSITE" id="PS51184">
    <property type="entry name" value="JMJC"/>
    <property type="match status" value="1"/>
</dbReference>
<accession>Q5R6G2</accession>
<reference key="1">
    <citation type="submission" date="2004-11" db="EMBL/GenBank/DDBJ databases">
        <authorList>
            <consortium name="The German cDNA consortium"/>
        </authorList>
    </citation>
    <scope>NUCLEOTIDE SEQUENCE [LARGE SCALE MRNA]</scope>
    <source>
        <tissue>Heart</tissue>
    </source>
</reference>
<feature type="chain" id="PRO_0000129371" description="Bifunctional arginine demethylase and lysyl-hydroxylase JMJD6">
    <location>
        <begin position="1"/>
        <end position="403"/>
    </location>
</feature>
<feature type="domain" description="JmjC" evidence="4">
    <location>
        <begin position="141"/>
        <end position="305"/>
    </location>
</feature>
<feature type="region of interest" description="Disordered" evidence="5">
    <location>
        <begin position="336"/>
        <end position="403"/>
    </location>
</feature>
<feature type="short sequence motif" description="Nuclear localization signal 1" evidence="2">
    <location>
        <begin position="6"/>
        <end position="10"/>
    </location>
</feature>
<feature type="short sequence motif" description="Nuclear localization signal 2" evidence="2">
    <location>
        <begin position="91"/>
        <end position="95"/>
    </location>
</feature>
<feature type="short sequence motif" description="Nuclear localization signal 3" evidence="2">
    <location>
        <begin position="141"/>
        <end position="145"/>
    </location>
</feature>
<feature type="short sequence motif" description="Nuclear localization signal 4" evidence="2">
    <location>
        <begin position="167"/>
        <end position="170"/>
    </location>
</feature>
<feature type="short sequence motif" description="Nuclear localization signal 5" evidence="2">
    <location>
        <begin position="373"/>
        <end position="378"/>
    </location>
</feature>
<feature type="compositionally biased region" description="Low complexity" evidence="5">
    <location>
        <begin position="340"/>
        <end position="356"/>
    </location>
</feature>
<feature type="compositionally biased region" description="Basic and acidic residues" evidence="5">
    <location>
        <begin position="394"/>
        <end position="403"/>
    </location>
</feature>
<feature type="binding site" evidence="1">
    <location>
        <position position="184"/>
    </location>
    <ligand>
        <name>substrate</name>
    </ligand>
</feature>
<feature type="binding site" evidence="4">
    <location>
        <position position="187"/>
    </location>
    <ligand>
        <name>Fe cation</name>
        <dbReference type="ChEBI" id="CHEBI:24875"/>
        <note>catalytic</note>
    </ligand>
</feature>
<feature type="binding site" evidence="4">
    <location>
        <position position="189"/>
    </location>
    <ligand>
        <name>Fe cation</name>
        <dbReference type="ChEBI" id="CHEBI:24875"/>
        <note>catalytic</note>
    </ligand>
</feature>
<feature type="binding site" evidence="2">
    <location>
        <position position="197"/>
    </location>
    <ligand>
        <name>2-oxoglutarate</name>
        <dbReference type="ChEBI" id="CHEBI:16810"/>
    </ligand>
</feature>
<feature type="binding site" evidence="1">
    <location>
        <position position="204"/>
    </location>
    <ligand>
        <name>substrate</name>
    </ligand>
</feature>
<feature type="binding site" evidence="4">
    <location>
        <position position="273"/>
    </location>
    <ligand>
        <name>Fe cation</name>
        <dbReference type="ChEBI" id="CHEBI:24875"/>
        <note>catalytic</note>
    </ligand>
</feature>
<feature type="binding site" evidence="2">
    <location>
        <position position="285"/>
    </location>
    <ligand>
        <name>2-oxoglutarate</name>
        <dbReference type="ChEBI" id="CHEBI:16810"/>
    </ligand>
</feature>
<feature type="modified residue" description="Phosphoserine" evidence="2">
    <location>
        <position position="38"/>
    </location>
</feature>
<name>JMJD6_PONAB</name>
<evidence type="ECO:0000250" key="1"/>
<evidence type="ECO:0000250" key="2">
    <source>
        <dbReference type="UniProtKB" id="Q6NYC1"/>
    </source>
</evidence>
<evidence type="ECO:0000250" key="3">
    <source>
        <dbReference type="UniProtKB" id="Q9ERI5"/>
    </source>
</evidence>
<evidence type="ECO:0000255" key="4">
    <source>
        <dbReference type="PROSITE-ProRule" id="PRU00538"/>
    </source>
</evidence>
<evidence type="ECO:0000256" key="5">
    <source>
        <dbReference type="SAM" id="MobiDB-lite"/>
    </source>
</evidence>
<evidence type="ECO:0000305" key="6"/>
<proteinExistence type="evidence at transcript level"/>
<organism>
    <name type="scientific">Pongo abelii</name>
    <name type="common">Sumatran orangutan</name>
    <name type="synonym">Pongo pygmaeus abelii</name>
    <dbReference type="NCBI Taxonomy" id="9601"/>
    <lineage>
        <taxon>Eukaryota</taxon>
        <taxon>Metazoa</taxon>
        <taxon>Chordata</taxon>
        <taxon>Craniata</taxon>
        <taxon>Vertebrata</taxon>
        <taxon>Euteleostomi</taxon>
        <taxon>Mammalia</taxon>
        <taxon>Eutheria</taxon>
        <taxon>Euarchontoglires</taxon>
        <taxon>Primates</taxon>
        <taxon>Haplorrhini</taxon>
        <taxon>Catarrhini</taxon>
        <taxon>Hominidae</taxon>
        <taxon>Pongo</taxon>
    </lineage>
</organism>
<sequence length="403" mass="46462">MNHKSKKRIREAKRSARPELKDSLDWTRHNYYESFSLSPAAVADNVERADALQLSVEEFVERYERPYKPVVLLNAQEGWSAQEKWTLERLKRKYRNQKFKCGEDNDGYSVKMKMKYYIEYMESTRDDSPLYIFDSSYGEHPKRRKLLEDYKVPKFFTDDLFQYAGEKRRPPYRWFVMGPPRSGTGIHIDPLGTSAWNALVQGHKRWCLFPTSTPRELIKVTRDEGGNQQDEAITWFNVIYPRTQLPTWPPEFKPLEILQKPGETVFVPGGWWHVVLNLDTTIAITQNFASSTNFPVVWHKTVRGRPKLSRKWYRILKQEHPELAVLADSVDLQESTGIASDSSSDSSSSSSSSSSDSDSECESGSEGDGTVHRRKKRRTCSMVGNGDTTSQDDCVSKERSSSR</sequence>